<accession>A7H1P3</accession>
<proteinExistence type="inferred from homology"/>
<gene>
    <name evidence="1" type="primary">miaA</name>
    <name type="ordered locus">JJD26997_0181</name>
</gene>
<evidence type="ECO:0000255" key="1">
    <source>
        <dbReference type="HAMAP-Rule" id="MF_00185"/>
    </source>
</evidence>
<comment type="function">
    <text evidence="1">Catalyzes the transfer of a dimethylallyl group onto the adenine at position 37 in tRNAs that read codons beginning with uridine, leading to the formation of N6-(dimethylallyl)adenosine (i(6)A).</text>
</comment>
<comment type="catalytic activity">
    <reaction evidence="1">
        <text>adenosine(37) in tRNA + dimethylallyl diphosphate = N(6)-dimethylallyladenosine(37) in tRNA + diphosphate</text>
        <dbReference type="Rhea" id="RHEA:26482"/>
        <dbReference type="Rhea" id="RHEA-COMP:10162"/>
        <dbReference type="Rhea" id="RHEA-COMP:10375"/>
        <dbReference type="ChEBI" id="CHEBI:33019"/>
        <dbReference type="ChEBI" id="CHEBI:57623"/>
        <dbReference type="ChEBI" id="CHEBI:74411"/>
        <dbReference type="ChEBI" id="CHEBI:74415"/>
        <dbReference type="EC" id="2.5.1.75"/>
    </reaction>
</comment>
<comment type="cofactor">
    <cofactor evidence="1">
        <name>Mg(2+)</name>
        <dbReference type="ChEBI" id="CHEBI:18420"/>
    </cofactor>
</comment>
<comment type="subunit">
    <text evidence="1">Monomer.</text>
</comment>
<comment type="similarity">
    <text evidence="1">Belongs to the IPP transferase family.</text>
</comment>
<sequence>MFFEIALIGTTASGKTYIADTLAREFDAVVLSLDSLCVYKEINIASAKPSQDDLASIKYFGVNLLSVNEHFNVELFIREYQKAKEFALARNLPLIIVGGTGFYLKTMIDGLSEKTLESKSSLNNDEIYTLLLNIDPNYKIEKNDTYRLKKWLGIYEQTREIPSEFLKRTQKTGVLKDIEIYELAWDKEILKKRIQTRTKEMLDNGLLDEAKILFYKFDHKLKALNSIGLKECKEYLDGEISFKDLENLITIHTTQLAKRQRTFNKKFQSKALEFDKALATLRMKFSIEK</sequence>
<protein>
    <recommendedName>
        <fullName evidence="1">tRNA dimethylallyltransferase</fullName>
        <ecNumber evidence="1">2.5.1.75</ecNumber>
    </recommendedName>
    <alternativeName>
        <fullName evidence="1">Dimethylallyl diphosphate:tRNA dimethylallyltransferase</fullName>
        <shortName evidence="1">DMAPP:tRNA dimethylallyltransferase</shortName>
        <shortName evidence="1">DMATase</shortName>
    </alternativeName>
    <alternativeName>
        <fullName evidence="1">Isopentenyl-diphosphate:tRNA isopentenyltransferase</fullName>
        <shortName evidence="1">IPP transferase</shortName>
        <shortName evidence="1">IPPT</shortName>
        <shortName evidence="1">IPTase</shortName>
    </alternativeName>
</protein>
<name>MIAA_CAMJD</name>
<keyword id="KW-0067">ATP-binding</keyword>
<keyword id="KW-0460">Magnesium</keyword>
<keyword id="KW-0547">Nucleotide-binding</keyword>
<keyword id="KW-0808">Transferase</keyword>
<keyword id="KW-0819">tRNA processing</keyword>
<organism>
    <name type="scientific">Campylobacter jejuni subsp. doylei (strain ATCC BAA-1458 / RM4099 / 269.97)</name>
    <dbReference type="NCBI Taxonomy" id="360109"/>
    <lineage>
        <taxon>Bacteria</taxon>
        <taxon>Pseudomonadati</taxon>
        <taxon>Campylobacterota</taxon>
        <taxon>Epsilonproteobacteria</taxon>
        <taxon>Campylobacterales</taxon>
        <taxon>Campylobacteraceae</taxon>
        <taxon>Campylobacter</taxon>
    </lineage>
</organism>
<feature type="chain" id="PRO_0000377105" description="tRNA dimethylallyltransferase">
    <location>
        <begin position="1"/>
        <end position="289"/>
    </location>
</feature>
<feature type="region of interest" description="Interaction with substrate tRNA" evidence="1">
    <location>
        <begin position="34"/>
        <end position="37"/>
    </location>
</feature>
<feature type="binding site" evidence="1">
    <location>
        <begin position="9"/>
        <end position="16"/>
    </location>
    <ligand>
        <name>ATP</name>
        <dbReference type="ChEBI" id="CHEBI:30616"/>
    </ligand>
</feature>
<feature type="binding site" evidence="1">
    <location>
        <begin position="11"/>
        <end position="16"/>
    </location>
    <ligand>
        <name>substrate</name>
    </ligand>
</feature>
<feature type="site" description="Interaction with substrate tRNA" evidence="1">
    <location>
        <position position="100"/>
    </location>
</feature>
<reference key="1">
    <citation type="submission" date="2007-07" db="EMBL/GenBank/DDBJ databases">
        <title>Complete genome sequence of Campylobacter jejuni subsp doylei 269.97 isolated from human blood.</title>
        <authorList>
            <person name="Fouts D.E."/>
            <person name="Mongodin E.F."/>
            <person name="Puiu D."/>
            <person name="Sebastian Y."/>
            <person name="Miller W.G."/>
            <person name="Mandrell R.E."/>
            <person name="Lastovica A.J."/>
            <person name="Nelson K.E."/>
        </authorList>
    </citation>
    <scope>NUCLEOTIDE SEQUENCE [LARGE SCALE GENOMIC DNA]</scope>
    <source>
        <strain>ATCC BAA-1458 / RM4099 / 269.97</strain>
    </source>
</reference>
<dbReference type="EC" id="2.5.1.75" evidence="1"/>
<dbReference type="EMBL" id="CP000768">
    <property type="protein sequence ID" value="ABS43960.1"/>
    <property type="molecule type" value="Genomic_DNA"/>
</dbReference>
<dbReference type="SMR" id="A7H1P3"/>
<dbReference type="KEGG" id="cjd:JJD26997_0181"/>
<dbReference type="HOGENOM" id="CLU_032616_0_1_7"/>
<dbReference type="Proteomes" id="UP000002302">
    <property type="component" value="Chromosome"/>
</dbReference>
<dbReference type="GO" id="GO:0005524">
    <property type="term" value="F:ATP binding"/>
    <property type="evidence" value="ECO:0007669"/>
    <property type="project" value="UniProtKB-UniRule"/>
</dbReference>
<dbReference type="GO" id="GO:0052381">
    <property type="term" value="F:tRNA dimethylallyltransferase activity"/>
    <property type="evidence" value="ECO:0007669"/>
    <property type="project" value="UniProtKB-UniRule"/>
</dbReference>
<dbReference type="GO" id="GO:0006400">
    <property type="term" value="P:tRNA modification"/>
    <property type="evidence" value="ECO:0007669"/>
    <property type="project" value="TreeGrafter"/>
</dbReference>
<dbReference type="Gene3D" id="1.10.20.140">
    <property type="match status" value="1"/>
</dbReference>
<dbReference type="Gene3D" id="3.40.50.300">
    <property type="entry name" value="P-loop containing nucleotide triphosphate hydrolases"/>
    <property type="match status" value="1"/>
</dbReference>
<dbReference type="HAMAP" id="MF_00185">
    <property type="entry name" value="IPP_trans"/>
    <property type="match status" value="1"/>
</dbReference>
<dbReference type="InterPro" id="IPR039657">
    <property type="entry name" value="Dimethylallyltransferase"/>
</dbReference>
<dbReference type="InterPro" id="IPR018022">
    <property type="entry name" value="IPT"/>
</dbReference>
<dbReference type="InterPro" id="IPR027417">
    <property type="entry name" value="P-loop_NTPase"/>
</dbReference>
<dbReference type="NCBIfam" id="TIGR00174">
    <property type="entry name" value="miaA"/>
    <property type="match status" value="1"/>
</dbReference>
<dbReference type="PANTHER" id="PTHR11088">
    <property type="entry name" value="TRNA DIMETHYLALLYLTRANSFERASE"/>
    <property type="match status" value="1"/>
</dbReference>
<dbReference type="PANTHER" id="PTHR11088:SF60">
    <property type="entry name" value="TRNA DIMETHYLALLYLTRANSFERASE"/>
    <property type="match status" value="1"/>
</dbReference>
<dbReference type="Pfam" id="PF01715">
    <property type="entry name" value="IPPT"/>
    <property type="match status" value="1"/>
</dbReference>
<dbReference type="SUPFAM" id="SSF52540">
    <property type="entry name" value="P-loop containing nucleoside triphosphate hydrolases"/>
    <property type="match status" value="1"/>
</dbReference>